<proteinExistence type="inferred from homology"/>
<name>TRUB_GLUDA</name>
<evidence type="ECO:0000255" key="1">
    <source>
        <dbReference type="HAMAP-Rule" id="MF_01080"/>
    </source>
</evidence>
<keyword id="KW-0413">Isomerase</keyword>
<keyword id="KW-1185">Reference proteome</keyword>
<keyword id="KW-0819">tRNA processing</keyword>
<gene>
    <name evidence="1" type="primary">truB</name>
    <name type="ordered locus">GDI1368</name>
    <name type="ordered locus">Gdia_2073</name>
</gene>
<sequence length="306" mass="32939">MRRKRGRPIDGWLVIDKPSGMTSTDVVNRVKRLFDARKAGHGGTLDPLATGLLPIAFGAATKTVPYIMDGTKRYEFTLRLGEARDTDDAEGAVIETSDVRPTDDAFRAALPAFRGDIMQVPPIYSAIKVAGERAYDMAREGRAPDLPPRPARVDRFDLVARPDADTAIFAVESGKGVYMRSLARDIARACGTVGHVAALRRLRVGPFSEADAILLDKIVPSDDNAPASPDLLLPVATALADIPALALTHEEADALSHGRAVSLLDLMGRIPDAVDPACGIVRGMDGARVIGLCRLEDGWLRPDRML</sequence>
<protein>
    <recommendedName>
        <fullName evidence="1">tRNA pseudouridine synthase B</fullName>
        <ecNumber evidence="1">5.4.99.25</ecNumber>
    </recommendedName>
    <alternativeName>
        <fullName evidence="1">tRNA pseudouridine(55) synthase</fullName>
        <shortName evidence="1">Psi55 synthase</shortName>
    </alternativeName>
    <alternativeName>
        <fullName evidence="1">tRNA pseudouridylate synthase</fullName>
    </alternativeName>
    <alternativeName>
        <fullName evidence="1">tRNA-uridine isomerase</fullName>
    </alternativeName>
</protein>
<reference key="1">
    <citation type="journal article" date="2009" name="BMC Genomics">
        <title>Complete genome sequence of the sugarcane nitrogen-fixing endophyte Gluconacetobacter diazotrophicus Pal5.</title>
        <authorList>
            <person name="Bertalan M."/>
            <person name="Albano R."/>
            <person name="de Padua V."/>
            <person name="Rouws L."/>
            <person name="Rojas C."/>
            <person name="Hemerly A."/>
            <person name="Teixeira K."/>
            <person name="Schwab S."/>
            <person name="Araujo J."/>
            <person name="Oliveira A."/>
            <person name="Franca L."/>
            <person name="Magalhaes V."/>
            <person name="Alqueres S."/>
            <person name="Cardoso A."/>
            <person name="Almeida W."/>
            <person name="Loureiro M.M."/>
            <person name="Nogueira E."/>
            <person name="Cidade D."/>
            <person name="Oliveira D."/>
            <person name="Simao T."/>
            <person name="Macedo J."/>
            <person name="Valadao A."/>
            <person name="Dreschsel M."/>
            <person name="Freitas F."/>
            <person name="Vidal M."/>
            <person name="Guedes H."/>
            <person name="Rodrigues E."/>
            <person name="Meneses C."/>
            <person name="Brioso P."/>
            <person name="Pozzer L."/>
            <person name="Figueiredo D."/>
            <person name="Montano H."/>
            <person name="Junior J."/>
            <person name="de Souza Filho G."/>
            <person name="Martin Quintana Flores V."/>
            <person name="Ferreira B."/>
            <person name="Branco A."/>
            <person name="Gonzalez P."/>
            <person name="Guillobel H."/>
            <person name="Lemos M."/>
            <person name="Seibel L."/>
            <person name="Macedo J."/>
            <person name="Alves-Ferreira M."/>
            <person name="Sachetto-Martins G."/>
            <person name="Coelho A."/>
            <person name="Santos E."/>
            <person name="Amaral G."/>
            <person name="Neves A."/>
            <person name="Pacheco A.B."/>
            <person name="Carvalho D."/>
            <person name="Lery L."/>
            <person name="Bisch P."/>
            <person name="Rossle S.C."/>
            <person name="Urmenyi T."/>
            <person name="Rael Pereira A."/>
            <person name="Silva R."/>
            <person name="Rondinelli E."/>
            <person name="von Kruger W."/>
            <person name="Martins O."/>
            <person name="Baldani J.I."/>
            <person name="Ferreira P.C."/>
        </authorList>
    </citation>
    <scope>NUCLEOTIDE SEQUENCE [LARGE SCALE GENOMIC DNA]</scope>
    <source>
        <strain>ATCC 49037 / DSM 5601 / CCUG 37298 / CIP 103539 / LMG 7603 / PAl5</strain>
    </source>
</reference>
<reference key="2">
    <citation type="journal article" date="2010" name="Stand. Genomic Sci.">
        <title>Two genome sequences of the same bacterial strain, Gluconacetobacter diazotrophicus PAl 5, suggest a new standard in genome sequence submission.</title>
        <authorList>
            <person name="Giongo A."/>
            <person name="Tyler H.L."/>
            <person name="Zipperer U.N."/>
            <person name="Triplett E.W."/>
        </authorList>
    </citation>
    <scope>NUCLEOTIDE SEQUENCE [LARGE SCALE GENOMIC DNA]</scope>
    <source>
        <strain>ATCC 49037 / DSM 5601 / CCUG 37298 / CIP 103539 / LMG 7603 / PAl5</strain>
    </source>
</reference>
<comment type="function">
    <text evidence="1">Responsible for synthesis of pseudouridine from uracil-55 in the psi GC loop of transfer RNAs.</text>
</comment>
<comment type="catalytic activity">
    <reaction evidence="1">
        <text>uridine(55) in tRNA = pseudouridine(55) in tRNA</text>
        <dbReference type="Rhea" id="RHEA:42532"/>
        <dbReference type="Rhea" id="RHEA-COMP:10101"/>
        <dbReference type="Rhea" id="RHEA-COMP:10102"/>
        <dbReference type="ChEBI" id="CHEBI:65314"/>
        <dbReference type="ChEBI" id="CHEBI:65315"/>
        <dbReference type="EC" id="5.4.99.25"/>
    </reaction>
</comment>
<comment type="similarity">
    <text evidence="1">Belongs to the pseudouridine synthase TruB family. Type 1 subfamily.</text>
</comment>
<organism>
    <name type="scientific">Gluconacetobacter diazotrophicus (strain ATCC 49037 / DSM 5601 / CCUG 37298 / CIP 103539 / LMG 7603 / PAl5)</name>
    <dbReference type="NCBI Taxonomy" id="272568"/>
    <lineage>
        <taxon>Bacteria</taxon>
        <taxon>Pseudomonadati</taxon>
        <taxon>Pseudomonadota</taxon>
        <taxon>Alphaproteobacteria</taxon>
        <taxon>Acetobacterales</taxon>
        <taxon>Acetobacteraceae</taxon>
        <taxon>Gluconacetobacter</taxon>
    </lineage>
</organism>
<feature type="chain" id="PRO_1000084601" description="tRNA pseudouridine synthase B">
    <location>
        <begin position="1"/>
        <end position="306"/>
    </location>
</feature>
<feature type="active site" description="Nucleophile" evidence="1">
    <location>
        <position position="46"/>
    </location>
</feature>
<accession>A9HF26</accession>
<accession>B5ZDK3</accession>
<dbReference type="EC" id="5.4.99.25" evidence="1"/>
<dbReference type="EMBL" id="AM889285">
    <property type="protein sequence ID" value="CAP55311.1"/>
    <property type="molecule type" value="Genomic_DNA"/>
</dbReference>
<dbReference type="EMBL" id="CP001189">
    <property type="protein sequence ID" value="ACI51833.1"/>
    <property type="molecule type" value="Genomic_DNA"/>
</dbReference>
<dbReference type="RefSeq" id="WP_012224614.1">
    <property type="nucleotide sequence ID" value="NC_010125.1"/>
</dbReference>
<dbReference type="SMR" id="A9HF26"/>
<dbReference type="STRING" id="272568.GDI1368"/>
<dbReference type="KEGG" id="gdi:GDI1368"/>
<dbReference type="KEGG" id="gdj:Gdia_2073"/>
<dbReference type="eggNOG" id="COG0130">
    <property type="taxonomic scope" value="Bacteria"/>
</dbReference>
<dbReference type="HOGENOM" id="CLU_032087_0_3_5"/>
<dbReference type="OrthoDB" id="9802309at2"/>
<dbReference type="Proteomes" id="UP000001176">
    <property type="component" value="Chromosome"/>
</dbReference>
<dbReference type="GO" id="GO:0003723">
    <property type="term" value="F:RNA binding"/>
    <property type="evidence" value="ECO:0007669"/>
    <property type="project" value="InterPro"/>
</dbReference>
<dbReference type="GO" id="GO:0160148">
    <property type="term" value="F:tRNA pseudouridine(55) synthase activity"/>
    <property type="evidence" value="ECO:0007669"/>
    <property type="project" value="UniProtKB-EC"/>
</dbReference>
<dbReference type="GO" id="GO:1990481">
    <property type="term" value="P:mRNA pseudouridine synthesis"/>
    <property type="evidence" value="ECO:0007669"/>
    <property type="project" value="TreeGrafter"/>
</dbReference>
<dbReference type="GO" id="GO:0031119">
    <property type="term" value="P:tRNA pseudouridine synthesis"/>
    <property type="evidence" value="ECO:0007669"/>
    <property type="project" value="UniProtKB-UniRule"/>
</dbReference>
<dbReference type="CDD" id="cd02573">
    <property type="entry name" value="PseudoU_synth_EcTruB"/>
    <property type="match status" value="1"/>
</dbReference>
<dbReference type="CDD" id="cd21152">
    <property type="entry name" value="PUA_TruB_bacterial"/>
    <property type="match status" value="1"/>
</dbReference>
<dbReference type="Gene3D" id="3.30.2350.10">
    <property type="entry name" value="Pseudouridine synthase"/>
    <property type="match status" value="1"/>
</dbReference>
<dbReference type="HAMAP" id="MF_01080">
    <property type="entry name" value="TruB_bact"/>
    <property type="match status" value="1"/>
</dbReference>
<dbReference type="InterPro" id="IPR020103">
    <property type="entry name" value="PsdUridine_synth_cat_dom_sf"/>
</dbReference>
<dbReference type="InterPro" id="IPR002501">
    <property type="entry name" value="PsdUridine_synth_N"/>
</dbReference>
<dbReference type="InterPro" id="IPR014780">
    <property type="entry name" value="tRNA_psdUridine_synth_TruB"/>
</dbReference>
<dbReference type="InterPro" id="IPR032819">
    <property type="entry name" value="TruB_C"/>
</dbReference>
<dbReference type="NCBIfam" id="TIGR00431">
    <property type="entry name" value="TruB"/>
    <property type="match status" value="1"/>
</dbReference>
<dbReference type="PANTHER" id="PTHR13767:SF2">
    <property type="entry name" value="PSEUDOURIDYLATE SYNTHASE TRUB1"/>
    <property type="match status" value="1"/>
</dbReference>
<dbReference type="PANTHER" id="PTHR13767">
    <property type="entry name" value="TRNA-PSEUDOURIDINE SYNTHASE"/>
    <property type="match status" value="1"/>
</dbReference>
<dbReference type="Pfam" id="PF16198">
    <property type="entry name" value="TruB_C_2"/>
    <property type="match status" value="1"/>
</dbReference>
<dbReference type="Pfam" id="PF01509">
    <property type="entry name" value="TruB_N"/>
    <property type="match status" value="1"/>
</dbReference>
<dbReference type="SUPFAM" id="SSF55120">
    <property type="entry name" value="Pseudouridine synthase"/>
    <property type="match status" value="1"/>
</dbReference>